<feature type="chain" id="PRO_0000189462" description="2-C-methyl-D-erythritol 2,4-cyclodiphosphate synthase">
    <location>
        <begin position="1"/>
        <end position="160"/>
    </location>
</feature>
<feature type="binding site" evidence="1">
    <location>
        <begin position="14"/>
        <end position="16"/>
    </location>
    <ligand>
        <name>4-CDP-2-C-methyl-D-erythritol 2-phosphate</name>
        <dbReference type="ChEBI" id="CHEBI:57919"/>
    </ligand>
</feature>
<feature type="binding site" evidence="1">
    <location>
        <position position="14"/>
    </location>
    <ligand>
        <name>a divalent metal cation</name>
        <dbReference type="ChEBI" id="CHEBI:60240"/>
    </ligand>
</feature>
<feature type="binding site" evidence="1">
    <location>
        <position position="16"/>
    </location>
    <ligand>
        <name>a divalent metal cation</name>
        <dbReference type="ChEBI" id="CHEBI:60240"/>
    </ligand>
</feature>
<feature type="binding site" evidence="1">
    <location>
        <begin position="40"/>
        <end position="41"/>
    </location>
    <ligand>
        <name>4-CDP-2-C-methyl-D-erythritol 2-phosphate</name>
        <dbReference type="ChEBI" id="CHEBI:57919"/>
    </ligand>
</feature>
<feature type="binding site" evidence="1">
    <location>
        <position position="48"/>
    </location>
    <ligand>
        <name>a divalent metal cation</name>
        <dbReference type="ChEBI" id="CHEBI:60240"/>
    </ligand>
</feature>
<feature type="binding site" evidence="1">
    <location>
        <begin position="62"/>
        <end position="64"/>
    </location>
    <ligand>
        <name>4-CDP-2-C-methyl-D-erythritol 2-phosphate</name>
        <dbReference type="ChEBI" id="CHEBI:57919"/>
    </ligand>
</feature>
<feature type="binding site" evidence="1">
    <location>
        <begin position="135"/>
        <end position="138"/>
    </location>
    <ligand>
        <name>4-CDP-2-C-methyl-D-erythritol 2-phosphate</name>
        <dbReference type="ChEBI" id="CHEBI:57919"/>
    </ligand>
</feature>
<feature type="binding site" evidence="1">
    <location>
        <position position="142"/>
    </location>
    <ligand>
        <name>4-CDP-2-C-methyl-D-erythritol 2-phosphate</name>
        <dbReference type="ChEBI" id="CHEBI:57919"/>
    </ligand>
</feature>
<feature type="binding site" evidence="1">
    <location>
        <position position="145"/>
    </location>
    <ligand>
        <name>4-CDP-2-C-methyl-D-erythritol 2-phosphate</name>
        <dbReference type="ChEBI" id="CHEBI:57919"/>
    </ligand>
</feature>
<feature type="site" description="Transition state stabilizer" evidence="1">
    <location>
        <position position="40"/>
    </location>
</feature>
<feature type="site" description="Transition state stabilizer" evidence="1">
    <location>
        <position position="136"/>
    </location>
</feature>
<gene>
    <name evidence="1" type="primary">ispF</name>
    <name type="ordered locus">Cgl2659</name>
    <name type="ordered locus">cg2944</name>
</gene>
<dbReference type="EC" id="4.6.1.12" evidence="1"/>
<dbReference type="EMBL" id="BA000036">
    <property type="protein sequence ID" value="BAC00053.1"/>
    <property type="molecule type" value="Genomic_DNA"/>
</dbReference>
<dbReference type="EMBL" id="BX927156">
    <property type="protein sequence ID" value="CAF20683.1"/>
    <property type="molecule type" value="Genomic_DNA"/>
</dbReference>
<dbReference type="RefSeq" id="NP_601858.1">
    <property type="nucleotide sequence ID" value="NC_003450.3"/>
</dbReference>
<dbReference type="RefSeq" id="WP_011015288.1">
    <property type="nucleotide sequence ID" value="NC_006958.1"/>
</dbReference>
<dbReference type="SMR" id="Q8NMB9"/>
<dbReference type="STRING" id="196627.cg2944"/>
<dbReference type="GeneID" id="1020607"/>
<dbReference type="KEGG" id="cgb:cg2944"/>
<dbReference type="KEGG" id="cgl:Cgl2659"/>
<dbReference type="PATRIC" id="fig|196627.13.peg.2594"/>
<dbReference type="eggNOG" id="COG0245">
    <property type="taxonomic scope" value="Bacteria"/>
</dbReference>
<dbReference type="HOGENOM" id="CLU_084630_1_0_11"/>
<dbReference type="OrthoDB" id="9804336at2"/>
<dbReference type="BioCyc" id="CORYNE:G18NG-12276-MONOMER"/>
<dbReference type="UniPathway" id="UPA00056">
    <property type="reaction ID" value="UER00095"/>
</dbReference>
<dbReference type="Proteomes" id="UP000000582">
    <property type="component" value="Chromosome"/>
</dbReference>
<dbReference type="Proteomes" id="UP000001009">
    <property type="component" value="Chromosome"/>
</dbReference>
<dbReference type="GO" id="GO:0008685">
    <property type="term" value="F:2-C-methyl-D-erythritol 2,4-cyclodiphosphate synthase activity"/>
    <property type="evidence" value="ECO:0007669"/>
    <property type="project" value="UniProtKB-UniRule"/>
</dbReference>
<dbReference type="GO" id="GO:0046872">
    <property type="term" value="F:metal ion binding"/>
    <property type="evidence" value="ECO:0007669"/>
    <property type="project" value="UniProtKB-KW"/>
</dbReference>
<dbReference type="GO" id="GO:0019288">
    <property type="term" value="P:isopentenyl diphosphate biosynthetic process, methylerythritol 4-phosphate pathway"/>
    <property type="evidence" value="ECO:0007669"/>
    <property type="project" value="UniProtKB-UniRule"/>
</dbReference>
<dbReference type="GO" id="GO:0016114">
    <property type="term" value="P:terpenoid biosynthetic process"/>
    <property type="evidence" value="ECO:0007669"/>
    <property type="project" value="InterPro"/>
</dbReference>
<dbReference type="CDD" id="cd00554">
    <property type="entry name" value="MECDP_synthase"/>
    <property type="match status" value="1"/>
</dbReference>
<dbReference type="FunFam" id="3.30.1330.50:FF:000003">
    <property type="entry name" value="2-C-methyl-D-erythritol 2,4-cyclodiphosphate synthase"/>
    <property type="match status" value="1"/>
</dbReference>
<dbReference type="Gene3D" id="3.30.1330.50">
    <property type="entry name" value="2-C-methyl-D-erythritol 2,4-cyclodiphosphate synthase"/>
    <property type="match status" value="1"/>
</dbReference>
<dbReference type="HAMAP" id="MF_00107">
    <property type="entry name" value="IspF"/>
    <property type="match status" value="1"/>
</dbReference>
<dbReference type="InterPro" id="IPR003526">
    <property type="entry name" value="MECDP_synthase"/>
</dbReference>
<dbReference type="InterPro" id="IPR020555">
    <property type="entry name" value="MECDP_synthase_CS"/>
</dbReference>
<dbReference type="InterPro" id="IPR036571">
    <property type="entry name" value="MECDP_synthase_sf"/>
</dbReference>
<dbReference type="NCBIfam" id="TIGR00151">
    <property type="entry name" value="ispF"/>
    <property type="match status" value="1"/>
</dbReference>
<dbReference type="PANTHER" id="PTHR43181">
    <property type="entry name" value="2-C-METHYL-D-ERYTHRITOL 2,4-CYCLODIPHOSPHATE SYNTHASE, CHLOROPLASTIC"/>
    <property type="match status" value="1"/>
</dbReference>
<dbReference type="PANTHER" id="PTHR43181:SF1">
    <property type="entry name" value="2-C-METHYL-D-ERYTHRITOL 2,4-CYCLODIPHOSPHATE SYNTHASE, CHLOROPLASTIC"/>
    <property type="match status" value="1"/>
</dbReference>
<dbReference type="Pfam" id="PF02542">
    <property type="entry name" value="YgbB"/>
    <property type="match status" value="1"/>
</dbReference>
<dbReference type="SUPFAM" id="SSF69765">
    <property type="entry name" value="IpsF-like"/>
    <property type="match status" value="1"/>
</dbReference>
<dbReference type="PROSITE" id="PS01350">
    <property type="entry name" value="ISPF"/>
    <property type="match status" value="1"/>
</dbReference>
<protein>
    <recommendedName>
        <fullName evidence="1">2-C-methyl-D-erythritol 2,4-cyclodiphosphate synthase</fullName>
        <shortName evidence="1">MECDP-synthase</shortName>
        <shortName evidence="1">MECPP-synthase</shortName>
        <shortName evidence="1">MECPS</shortName>
        <ecNumber evidence="1">4.6.1.12</ecNumber>
    </recommendedName>
</protein>
<comment type="function">
    <text evidence="1">Involved in the biosynthesis of isopentenyl diphosphate (IPP) and dimethylallyl diphosphate (DMAPP), two major building blocks of isoprenoid compounds. Catalyzes the conversion of 4-diphosphocytidyl-2-C-methyl-D-erythritol 2-phosphate (CDP-ME2P) to 2-C-methyl-D-erythritol 2,4-cyclodiphosphate (ME-CPP) with a corresponding release of cytidine 5-monophosphate (CMP).</text>
</comment>
<comment type="catalytic activity">
    <reaction evidence="1">
        <text>4-CDP-2-C-methyl-D-erythritol 2-phosphate = 2-C-methyl-D-erythritol 2,4-cyclic diphosphate + CMP</text>
        <dbReference type="Rhea" id="RHEA:23864"/>
        <dbReference type="ChEBI" id="CHEBI:57919"/>
        <dbReference type="ChEBI" id="CHEBI:58483"/>
        <dbReference type="ChEBI" id="CHEBI:60377"/>
        <dbReference type="EC" id="4.6.1.12"/>
    </reaction>
</comment>
<comment type="cofactor">
    <cofactor evidence="1">
        <name>a divalent metal cation</name>
        <dbReference type="ChEBI" id="CHEBI:60240"/>
    </cofactor>
    <text evidence="1">Binds 1 divalent metal cation per subunit.</text>
</comment>
<comment type="pathway">
    <text evidence="1">Isoprenoid biosynthesis; isopentenyl diphosphate biosynthesis via DXP pathway; isopentenyl diphosphate from 1-deoxy-D-xylulose 5-phosphate: step 4/6.</text>
</comment>
<comment type="subunit">
    <text evidence="1">Homotrimer.</text>
</comment>
<comment type="similarity">
    <text evidence="1">Belongs to the IspF family.</text>
</comment>
<reference key="1">
    <citation type="journal article" date="2003" name="Appl. Microbiol. Biotechnol.">
        <title>The Corynebacterium glutamicum genome: features and impacts on biotechnological processes.</title>
        <authorList>
            <person name="Ikeda M."/>
            <person name="Nakagawa S."/>
        </authorList>
    </citation>
    <scope>NUCLEOTIDE SEQUENCE [LARGE SCALE GENOMIC DNA]</scope>
    <source>
        <strain>ATCC 13032 / DSM 20300 / JCM 1318 / BCRC 11384 / CCUG 27702 / LMG 3730 / NBRC 12168 / NCIMB 10025 / NRRL B-2784 / 534</strain>
    </source>
</reference>
<reference key="2">
    <citation type="journal article" date="2003" name="J. Biotechnol.">
        <title>The complete Corynebacterium glutamicum ATCC 13032 genome sequence and its impact on the production of L-aspartate-derived amino acids and vitamins.</title>
        <authorList>
            <person name="Kalinowski J."/>
            <person name="Bathe B."/>
            <person name="Bartels D."/>
            <person name="Bischoff N."/>
            <person name="Bott M."/>
            <person name="Burkovski A."/>
            <person name="Dusch N."/>
            <person name="Eggeling L."/>
            <person name="Eikmanns B.J."/>
            <person name="Gaigalat L."/>
            <person name="Goesmann A."/>
            <person name="Hartmann M."/>
            <person name="Huthmacher K."/>
            <person name="Kraemer R."/>
            <person name="Linke B."/>
            <person name="McHardy A.C."/>
            <person name="Meyer F."/>
            <person name="Moeckel B."/>
            <person name="Pfefferle W."/>
            <person name="Puehler A."/>
            <person name="Rey D.A."/>
            <person name="Rueckert C."/>
            <person name="Rupp O."/>
            <person name="Sahm H."/>
            <person name="Wendisch V.F."/>
            <person name="Wiegraebe I."/>
            <person name="Tauch A."/>
        </authorList>
    </citation>
    <scope>NUCLEOTIDE SEQUENCE [LARGE SCALE GENOMIC DNA]</scope>
    <source>
        <strain>ATCC 13032 / DSM 20300 / JCM 1318 / BCRC 11384 / CCUG 27702 / LMG 3730 / NBRC 12168 / NCIMB 10025 / NRRL B-2784 / 534</strain>
    </source>
</reference>
<keyword id="KW-0414">Isoprene biosynthesis</keyword>
<keyword id="KW-0456">Lyase</keyword>
<keyword id="KW-0479">Metal-binding</keyword>
<keyword id="KW-1185">Reference proteome</keyword>
<evidence type="ECO:0000255" key="1">
    <source>
        <dbReference type="HAMAP-Rule" id="MF_00107"/>
    </source>
</evidence>
<name>ISPF_CORGL</name>
<accession>Q8NMB9</accession>
<proteinExistence type="inferred from homology"/>
<organism>
    <name type="scientific">Corynebacterium glutamicum (strain ATCC 13032 / DSM 20300 / JCM 1318 / BCRC 11384 / CCUG 27702 / LMG 3730 / NBRC 12168 / NCIMB 10025 / NRRL B-2784 / 534)</name>
    <dbReference type="NCBI Taxonomy" id="196627"/>
    <lineage>
        <taxon>Bacteria</taxon>
        <taxon>Bacillati</taxon>
        <taxon>Actinomycetota</taxon>
        <taxon>Actinomycetes</taxon>
        <taxon>Mycobacteriales</taxon>
        <taxon>Corynebacteriaceae</taxon>
        <taxon>Corynebacterium</taxon>
    </lineage>
</organism>
<sequence length="160" mass="16582">MTNPIIPRVGIATDAHQIEAGKPCWIACLLFEGVDGCEGHSDGDVVAHAIVDALLSASGLGDLGSFVGVGRPEYDGVSGTQLLKEVRELLSAHGYVIGNVAAQLVGQTPKFGPRREEAQQVISEIIGAPCSLSATTTDHMGFTGRSEGRASVATAVVWKA</sequence>